<proteinExistence type="inferred from homology"/>
<accession>P9WQK4</accession>
<accession>L0T5L5</accession>
<accession>O53618</accession>
<accession>Q7DAI2</accession>
<dbReference type="EMBL" id="AE000516">
    <property type="protein sequence ID" value="AAK44303.1"/>
    <property type="molecule type" value="Genomic_DNA"/>
</dbReference>
<dbReference type="PIR" id="B70849">
    <property type="entry name" value="B70849"/>
</dbReference>
<dbReference type="RefSeq" id="WP_003899801.1">
    <property type="nucleotide sequence ID" value="NZ_KK341227.1"/>
</dbReference>
<dbReference type="SMR" id="P9WQK4"/>
<dbReference type="KEGG" id="mtc:MT0079"/>
<dbReference type="PATRIC" id="fig|83331.31.peg.84"/>
<dbReference type="HOGENOM" id="CLU_000604_1_6_11"/>
<dbReference type="Proteomes" id="UP000001020">
    <property type="component" value="Chromosome"/>
</dbReference>
<dbReference type="GO" id="GO:0005886">
    <property type="term" value="C:plasma membrane"/>
    <property type="evidence" value="ECO:0007669"/>
    <property type="project" value="TreeGrafter"/>
</dbReference>
<dbReference type="GO" id="GO:0005524">
    <property type="term" value="F:ATP binding"/>
    <property type="evidence" value="ECO:0007669"/>
    <property type="project" value="UniProtKB-KW"/>
</dbReference>
<dbReference type="GO" id="GO:0016887">
    <property type="term" value="F:ATP hydrolysis activity"/>
    <property type="evidence" value="ECO:0007669"/>
    <property type="project" value="InterPro"/>
</dbReference>
<dbReference type="GO" id="GO:0022857">
    <property type="term" value="F:transmembrane transporter activity"/>
    <property type="evidence" value="ECO:0007669"/>
    <property type="project" value="TreeGrafter"/>
</dbReference>
<dbReference type="CDD" id="cd03255">
    <property type="entry name" value="ABC_MJ0796_LolCDE_FtsE"/>
    <property type="match status" value="1"/>
</dbReference>
<dbReference type="CDD" id="cd00038">
    <property type="entry name" value="CAP_ED"/>
    <property type="match status" value="1"/>
</dbReference>
<dbReference type="FunFam" id="3.40.50.300:FF:001448">
    <property type="entry name" value="Glutamine ABC transporter ATP-binding protein"/>
    <property type="match status" value="1"/>
</dbReference>
<dbReference type="FunFam" id="2.60.120.10:FF:000127">
    <property type="entry name" value="Glutamine-transport ATP-binding protein ABC transporter GLNQ"/>
    <property type="match status" value="1"/>
</dbReference>
<dbReference type="Gene3D" id="2.60.120.10">
    <property type="entry name" value="Jelly Rolls"/>
    <property type="match status" value="1"/>
</dbReference>
<dbReference type="Gene3D" id="3.40.50.300">
    <property type="entry name" value="P-loop containing nucleotide triphosphate hydrolases"/>
    <property type="match status" value="1"/>
</dbReference>
<dbReference type="InterPro" id="IPR003593">
    <property type="entry name" value="AAA+_ATPase"/>
</dbReference>
<dbReference type="InterPro" id="IPR003439">
    <property type="entry name" value="ABC_transporter-like_ATP-bd"/>
</dbReference>
<dbReference type="InterPro" id="IPR017871">
    <property type="entry name" value="ABC_transporter-like_CS"/>
</dbReference>
<dbReference type="InterPro" id="IPR015854">
    <property type="entry name" value="ABC_transpr_LolD-like"/>
</dbReference>
<dbReference type="InterPro" id="IPR018488">
    <property type="entry name" value="cNMP-bd_CS"/>
</dbReference>
<dbReference type="InterPro" id="IPR000595">
    <property type="entry name" value="cNMP-bd_dom"/>
</dbReference>
<dbReference type="InterPro" id="IPR018490">
    <property type="entry name" value="cNMP-bd_dom_sf"/>
</dbReference>
<dbReference type="InterPro" id="IPR017911">
    <property type="entry name" value="MacB-like_ATP-bd"/>
</dbReference>
<dbReference type="InterPro" id="IPR027417">
    <property type="entry name" value="P-loop_NTPase"/>
</dbReference>
<dbReference type="InterPro" id="IPR014710">
    <property type="entry name" value="RmlC-like_jellyroll"/>
</dbReference>
<dbReference type="PANTHER" id="PTHR24220">
    <property type="entry name" value="IMPORT ATP-BINDING PROTEIN"/>
    <property type="match status" value="1"/>
</dbReference>
<dbReference type="PANTHER" id="PTHR24220:SF689">
    <property type="entry name" value="LIPOPROTEIN-RELEASING SYSTEM ATP-BINDING PROTEIN LOLD"/>
    <property type="match status" value="1"/>
</dbReference>
<dbReference type="Pfam" id="PF00005">
    <property type="entry name" value="ABC_tran"/>
    <property type="match status" value="1"/>
</dbReference>
<dbReference type="Pfam" id="PF00027">
    <property type="entry name" value="cNMP_binding"/>
    <property type="match status" value="1"/>
</dbReference>
<dbReference type="PRINTS" id="PR00103">
    <property type="entry name" value="CAMPKINASE"/>
</dbReference>
<dbReference type="SMART" id="SM00382">
    <property type="entry name" value="AAA"/>
    <property type="match status" value="1"/>
</dbReference>
<dbReference type="SMART" id="SM00100">
    <property type="entry name" value="cNMP"/>
    <property type="match status" value="1"/>
</dbReference>
<dbReference type="SUPFAM" id="SSF51206">
    <property type="entry name" value="cAMP-binding domain-like"/>
    <property type="match status" value="1"/>
</dbReference>
<dbReference type="SUPFAM" id="SSF52540">
    <property type="entry name" value="P-loop containing nucleoside triphosphate hydrolases"/>
    <property type="match status" value="1"/>
</dbReference>
<dbReference type="PROSITE" id="PS00211">
    <property type="entry name" value="ABC_TRANSPORTER_1"/>
    <property type="match status" value="1"/>
</dbReference>
<dbReference type="PROSITE" id="PS50893">
    <property type="entry name" value="ABC_TRANSPORTER_2"/>
    <property type="match status" value="1"/>
</dbReference>
<dbReference type="PROSITE" id="PS00889">
    <property type="entry name" value="CNMP_BINDING_2"/>
    <property type="match status" value="1"/>
</dbReference>
<dbReference type="PROSITE" id="PS50042">
    <property type="entry name" value="CNMP_BINDING_3"/>
    <property type="match status" value="1"/>
</dbReference>
<reference key="1">
    <citation type="journal article" date="2002" name="J. Bacteriol.">
        <title>Whole-genome comparison of Mycobacterium tuberculosis clinical and laboratory strains.</title>
        <authorList>
            <person name="Fleischmann R.D."/>
            <person name="Alland D."/>
            <person name="Eisen J.A."/>
            <person name="Carpenter L."/>
            <person name="White O."/>
            <person name="Peterson J.D."/>
            <person name="DeBoy R.T."/>
            <person name="Dodson R.J."/>
            <person name="Gwinn M.L."/>
            <person name="Haft D.H."/>
            <person name="Hickey E.K."/>
            <person name="Kolonay J.F."/>
            <person name="Nelson W.C."/>
            <person name="Umayam L.A."/>
            <person name="Ermolaeva M.D."/>
            <person name="Salzberg S.L."/>
            <person name="Delcher A."/>
            <person name="Utterback T.R."/>
            <person name="Weidman J.F."/>
            <person name="Khouri H.M."/>
            <person name="Gill J."/>
            <person name="Mikula A."/>
            <person name="Bishai W."/>
            <person name="Jacobs W.R. Jr."/>
            <person name="Venter J.C."/>
            <person name="Fraser C.M."/>
        </authorList>
    </citation>
    <scope>NUCLEOTIDE SEQUENCE [LARGE SCALE GENOMIC DNA]</scope>
    <source>
        <strain>CDC 1551 / Oshkosh</strain>
    </source>
</reference>
<protein>
    <recommendedName>
        <fullName>Uncharacterized ABC transporter ATP-binding protein MT0079</fullName>
    </recommendedName>
</protein>
<feature type="chain" id="PRO_0000426760" description="Uncharacterized ABC transporter ATP-binding protein MT0079">
    <location>
        <begin position="1"/>
        <end position="330"/>
    </location>
</feature>
<feature type="domain" description="ABC transporter" evidence="2">
    <location>
        <begin position="4"/>
        <end position="242"/>
    </location>
</feature>
<feature type="binding site" evidence="2">
    <location>
        <begin position="40"/>
        <end position="47"/>
    </location>
    <ligand>
        <name>ATP</name>
        <dbReference type="ChEBI" id="CHEBI:30616"/>
    </ligand>
</feature>
<feature type="binding site">
    <location>
        <begin position="210"/>
        <end position="330"/>
    </location>
    <ligand>
        <name>a nucleoside 3',5'-cyclic phosphate</name>
        <dbReference type="ChEBI" id="CHEBI:58464"/>
    </ligand>
</feature>
<evidence type="ECO:0000250" key="1"/>
<evidence type="ECO:0000255" key="2">
    <source>
        <dbReference type="PROSITE-ProRule" id="PRU00434"/>
    </source>
</evidence>
<evidence type="ECO:0000305" key="3"/>
<organism>
    <name type="scientific">Mycobacterium tuberculosis (strain CDC 1551 / Oshkosh)</name>
    <dbReference type="NCBI Taxonomy" id="83331"/>
    <lineage>
        <taxon>Bacteria</taxon>
        <taxon>Bacillati</taxon>
        <taxon>Actinomycetota</taxon>
        <taxon>Actinomycetes</taxon>
        <taxon>Mycobacteriales</taxon>
        <taxon>Mycobacteriaceae</taxon>
        <taxon>Mycobacterium</taxon>
        <taxon>Mycobacterium tuberculosis complex</taxon>
    </lineage>
</organism>
<name>Y073_MYCTO</name>
<keyword id="KW-0067">ATP-binding</keyword>
<keyword id="KW-0547">Nucleotide-binding</keyword>
<keyword id="KW-1185">Reference proteome</keyword>
<keyword id="KW-0813">Transport</keyword>
<gene>
    <name type="ordered locus">MT0079</name>
</gene>
<comment type="function">
    <text evidence="1">Probably part of an ABC transporter complex. Probably responsible for energy coupling to the transport system (By similarity).</text>
</comment>
<comment type="subunit">
    <text evidence="3">The complex is composed of two ATP-binding proteins (MT0079), two transmembrane proteins (MT0078) and a solute-binding protein.</text>
</comment>
<comment type="similarity">
    <text evidence="3">Belongs to the ABC transporter superfamily.</text>
</comment>
<sequence>MGDLSIQNLVVEYYSGGYALRPINGLNLDVAAGSLVMLLGPSGCGKTTLLSCLGGILRPKSGAIKFDEVDITTLQGAELANYRRNKVGIVFQAFNLVPSLTAVENVMVPLRSAGMSRRASRRRAEELLARVNLAERMNHRPGDLSGGQQQRVAVARAIALDPPLILADEPTAHLDFIQVEEVLRLIRELADGERVVVVATHDSRMLPMADRVVELTPDFAETNRPPETVHLQAGEVLFEQSTMGDLIYVVSEGEFEIVHELADGGEELVKVAGPGDYFGEIGVLFHLPRSATVRARSDATAVGYTVQAFRERLGVGGLRDLIEHRALAND</sequence>